<keyword id="KW-1003">Cell membrane</keyword>
<keyword id="KW-0407">Ion channel</keyword>
<keyword id="KW-0406">Ion transport</keyword>
<keyword id="KW-0472">Membrane</keyword>
<keyword id="KW-0479">Metal-binding</keyword>
<keyword id="KW-1185">Reference proteome</keyword>
<keyword id="KW-0915">Sodium</keyword>
<keyword id="KW-0812">Transmembrane</keyword>
<keyword id="KW-1133">Transmembrane helix</keyword>
<keyword id="KW-0813">Transport</keyword>
<name>FLUC2_LACPL</name>
<accession>Q88ZT7</accession>
<accession>F9UT19</accession>
<organism>
    <name type="scientific">Lactiplantibacillus plantarum (strain ATCC BAA-793 / NCIMB 8826 / WCFS1)</name>
    <name type="common">Lactobacillus plantarum</name>
    <dbReference type="NCBI Taxonomy" id="220668"/>
    <lineage>
        <taxon>Bacteria</taxon>
        <taxon>Bacillati</taxon>
        <taxon>Bacillota</taxon>
        <taxon>Bacilli</taxon>
        <taxon>Lactobacillales</taxon>
        <taxon>Lactobacillaceae</taxon>
        <taxon>Lactiplantibacillus</taxon>
    </lineage>
</organism>
<proteinExistence type="inferred from homology"/>
<comment type="function">
    <text evidence="1">Fluoride-specific ion channel. Important for reducing fluoride concentration in the cell, thus reducing its toxicity.</text>
</comment>
<comment type="catalytic activity">
    <reaction evidence="1">
        <text>fluoride(in) = fluoride(out)</text>
        <dbReference type="Rhea" id="RHEA:76159"/>
        <dbReference type="ChEBI" id="CHEBI:17051"/>
    </reaction>
    <physiologicalReaction direction="left-to-right" evidence="1">
        <dbReference type="Rhea" id="RHEA:76160"/>
    </physiologicalReaction>
</comment>
<comment type="activity regulation">
    <text evidence="1">Na(+) is not transported, but it plays an essential structural role and its presence is essential for fluoride channel function.</text>
</comment>
<comment type="subcellular location">
    <subcellularLocation>
        <location evidence="1">Cell membrane</location>
        <topology evidence="1">Multi-pass membrane protein</topology>
    </subcellularLocation>
</comment>
<comment type="similarity">
    <text evidence="1">Belongs to the fluoride channel Fluc/FEX (TC 1.A.43) family.</text>
</comment>
<feature type="chain" id="PRO_0000110117" description="Fluoride-specific ion channel FluC 2">
    <location>
        <begin position="1"/>
        <end position="127"/>
    </location>
</feature>
<feature type="transmembrane region" description="Helical" evidence="1">
    <location>
        <begin position="4"/>
        <end position="24"/>
    </location>
</feature>
<feature type="transmembrane region" description="Helical" evidence="1">
    <location>
        <begin position="31"/>
        <end position="51"/>
    </location>
</feature>
<feature type="transmembrane region" description="Helical" evidence="1">
    <location>
        <begin position="62"/>
        <end position="82"/>
    </location>
</feature>
<feature type="transmembrane region" description="Helical" evidence="1">
    <location>
        <begin position="94"/>
        <end position="114"/>
    </location>
</feature>
<feature type="binding site" evidence="1">
    <location>
        <position position="72"/>
    </location>
    <ligand>
        <name>Na(+)</name>
        <dbReference type="ChEBI" id="CHEBI:29101"/>
        <note>structural</note>
    </ligand>
</feature>
<feature type="binding site" evidence="1">
    <location>
        <position position="75"/>
    </location>
    <ligand>
        <name>Na(+)</name>
        <dbReference type="ChEBI" id="CHEBI:29101"/>
        <note>structural</note>
    </ligand>
</feature>
<protein>
    <recommendedName>
        <fullName evidence="1">Fluoride-specific ion channel FluC 2</fullName>
    </recommendedName>
</protein>
<dbReference type="EMBL" id="AL935263">
    <property type="protein sequence ID" value="CCC77750.1"/>
    <property type="molecule type" value="Genomic_DNA"/>
</dbReference>
<dbReference type="RefSeq" id="WP_003641806.1">
    <property type="nucleotide sequence ID" value="NC_004567.2"/>
</dbReference>
<dbReference type="RefSeq" id="YP_004888264.1">
    <property type="nucleotide sequence ID" value="NC_004567.2"/>
</dbReference>
<dbReference type="SMR" id="Q88ZT7"/>
<dbReference type="STRING" id="220668.lp_0214"/>
<dbReference type="EnsemblBacteria" id="CCC77750">
    <property type="protein sequence ID" value="CCC77750"/>
    <property type="gene ID" value="lp_0214"/>
</dbReference>
<dbReference type="KEGG" id="lpl:lp_0214"/>
<dbReference type="PATRIC" id="fig|220668.9.peg.177"/>
<dbReference type="eggNOG" id="COG0239">
    <property type="taxonomic scope" value="Bacteria"/>
</dbReference>
<dbReference type="HOGENOM" id="CLU_114342_1_2_9"/>
<dbReference type="OrthoDB" id="2296621at2"/>
<dbReference type="Proteomes" id="UP000000432">
    <property type="component" value="Chromosome"/>
</dbReference>
<dbReference type="GO" id="GO:0005886">
    <property type="term" value="C:plasma membrane"/>
    <property type="evidence" value="ECO:0007669"/>
    <property type="project" value="UniProtKB-SubCell"/>
</dbReference>
<dbReference type="GO" id="GO:0062054">
    <property type="term" value="F:fluoride channel activity"/>
    <property type="evidence" value="ECO:0007669"/>
    <property type="project" value="UniProtKB-UniRule"/>
</dbReference>
<dbReference type="GO" id="GO:0046872">
    <property type="term" value="F:metal ion binding"/>
    <property type="evidence" value="ECO:0007669"/>
    <property type="project" value="UniProtKB-KW"/>
</dbReference>
<dbReference type="GO" id="GO:0140114">
    <property type="term" value="P:cellular detoxification of fluoride"/>
    <property type="evidence" value="ECO:0007669"/>
    <property type="project" value="UniProtKB-UniRule"/>
</dbReference>
<dbReference type="HAMAP" id="MF_00454">
    <property type="entry name" value="FluC"/>
    <property type="match status" value="1"/>
</dbReference>
<dbReference type="InterPro" id="IPR003691">
    <property type="entry name" value="FluC"/>
</dbReference>
<dbReference type="PANTHER" id="PTHR28259">
    <property type="entry name" value="FLUORIDE EXPORT PROTEIN 1-RELATED"/>
    <property type="match status" value="1"/>
</dbReference>
<dbReference type="PANTHER" id="PTHR28259:SF1">
    <property type="entry name" value="FLUORIDE EXPORT PROTEIN 1-RELATED"/>
    <property type="match status" value="1"/>
</dbReference>
<dbReference type="Pfam" id="PF02537">
    <property type="entry name" value="CRCB"/>
    <property type="match status" value="1"/>
</dbReference>
<sequence length="127" mass="13647">MKKIIAITGFAMLGGGLREGLSLLVTWPQHFWITCLINIVGAFVLSLITNLLPARLPVSEDIVIGMSVGFVGSFTTFSTFTFETLQSFQSGHSVLALSYVAASLGLGLLAGLAGNFLSTYWLPKEEF</sequence>
<reference key="1">
    <citation type="journal article" date="2003" name="Proc. Natl. Acad. Sci. U.S.A.">
        <title>Complete genome sequence of Lactobacillus plantarum WCFS1.</title>
        <authorList>
            <person name="Kleerebezem M."/>
            <person name="Boekhorst J."/>
            <person name="van Kranenburg R."/>
            <person name="Molenaar D."/>
            <person name="Kuipers O.P."/>
            <person name="Leer R."/>
            <person name="Tarchini R."/>
            <person name="Peters S.A."/>
            <person name="Sandbrink H.M."/>
            <person name="Fiers M.W.E.J."/>
            <person name="Stiekema W."/>
            <person name="Klein Lankhorst R.M."/>
            <person name="Bron P.A."/>
            <person name="Hoffer S.M."/>
            <person name="Nierop Groot M.N."/>
            <person name="Kerkhoven R."/>
            <person name="De Vries M."/>
            <person name="Ursing B."/>
            <person name="De Vos W.M."/>
            <person name="Siezen R.J."/>
        </authorList>
    </citation>
    <scope>NUCLEOTIDE SEQUENCE [LARGE SCALE GENOMIC DNA]</scope>
    <source>
        <strain>ATCC BAA-793 / NCIMB 8826 / WCFS1</strain>
    </source>
</reference>
<reference key="2">
    <citation type="journal article" date="2012" name="J. Bacteriol.">
        <title>Complete resequencing and reannotation of the Lactobacillus plantarum WCFS1 genome.</title>
        <authorList>
            <person name="Siezen R.J."/>
            <person name="Francke C."/>
            <person name="Renckens B."/>
            <person name="Boekhorst J."/>
            <person name="Wels M."/>
            <person name="Kleerebezem M."/>
            <person name="van Hijum S.A."/>
        </authorList>
    </citation>
    <scope>NUCLEOTIDE SEQUENCE [LARGE SCALE GENOMIC DNA]</scope>
    <scope>GENOME REANNOTATION</scope>
    <source>
        <strain>ATCC BAA-793 / NCIMB 8826 / WCFS1</strain>
    </source>
</reference>
<evidence type="ECO:0000255" key="1">
    <source>
        <dbReference type="HAMAP-Rule" id="MF_00454"/>
    </source>
</evidence>
<gene>
    <name evidence="1" type="primary">fluC2</name>
    <name evidence="1" type="synonym">crcB2</name>
    <name type="ordered locus">lp_0214</name>
</gene>